<gene>
    <name type="primary">NPIPB5</name>
</gene>
<accession>A8MRT5</accession>
<accession>B4DK13</accession>
<evidence type="ECO:0000255" key="1"/>
<evidence type="ECO:0000256" key="2">
    <source>
        <dbReference type="SAM" id="MobiDB-lite"/>
    </source>
</evidence>
<evidence type="ECO:0000305" key="3"/>
<keyword id="KW-0472">Membrane</keyword>
<keyword id="KW-1185">Reference proteome</keyword>
<keyword id="KW-0812">Transmembrane</keyword>
<keyword id="KW-1133">Transmembrane helix</keyword>
<organism>
    <name type="scientific">Homo sapiens</name>
    <name type="common">Human</name>
    <dbReference type="NCBI Taxonomy" id="9606"/>
    <lineage>
        <taxon>Eukaryota</taxon>
        <taxon>Metazoa</taxon>
        <taxon>Chordata</taxon>
        <taxon>Craniata</taxon>
        <taxon>Vertebrata</taxon>
        <taxon>Euteleostomi</taxon>
        <taxon>Mammalia</taxon>
        <taxon>Eutheria</taxon>
        <taxon>Euarchontoglires</taxon>
        <taxon>Primates</taxon>
        <taxon>Haplorrhini</taxon>
        <taxon>Catarrhini</taxon>
        <taxon>Hominidae</taxon>
        <taxon>Homo</taxon>
    </lineage>
</organism>
<feature type="chain" id="PRO_0000348052" description="Nuclear pore complex-interacting protein family member B5">
    <location>
        <begin position="1"/>
        <end position="1133"/>
    </location>
</feature>
<feature type="transmembrane region" description="Helical" evidence="1">
    <location>
        <begin position="60"/>
        <end position="84"/>
    </location>
</feature>
<feature type="region of interest" description="Disordered" evidence="2">
    <location>
        <begin position="241"/>
        <end position="262"/>
    </location>
</feature>
<feature type="region of interest" description="Disordered" evidence="2">
    <location>
        <begin position="290"/>
        <end position="575"/>
    </location>
</feature>
<feature type="region of interest" description="Disordered" evidence="2">
    <location>
        <begin position="868"/>
        <end position="1133"/>
    </location>
</feature>
<feature type="compositionally biased region" description="Polar residues" evidence="2">
    <location>
        <begin position="252"/>
        <end position="262"/>
    </location>
</feature>
<feature type="compositionally biased region" description="Pro residues" evidence="2">
    <location>
        <begin position="349"/>
        <end position="359"/>
    </location>
</feature>
<feature type="compositionally biased region" description="Basic and acidic residues" evidence="2">
    <location>
        <begin position="406"/>
        <end position="416"/>
    </location>
</feature>
<feature type="compositionally biased region" description="Basic and acidic residues" evidence="2">
    <location>
        <begin position="448"/>
        <end position="458"/>
    </location>
</feature>
<feature type="compositionally biased region" description="Basic and acidic residues" evidence="2">
    <location>
        <begin position="490"/>
        <end position="500"/>
    </location>
</feature>
<feature type="compositionally biased region" description="Basic and acidic residues" evidence="2">
    <location>
        <begin position="528"/>
        <end position="538"/>
    </location>
</feature>
<feature type="compositionally biased region" description="Basic and acidic residues" evidence="2">
    <location>
        <begin position="903"/>
        <end position="913"/>
    </location>
</feature>
<feature type="compositionally biased region" description="Basic and acidic residues" evidence="2">
    <location>
        <begin position="945"/>
        <end position="955"/>
    </location>
</feature>
<feature type="compositionally biased region" description="Basic and acidic residues" evidence="2">
    <location>
        <begin position="987"/>
        <end position="997"/>
    </location>
</feature>
<feature type="sequence conflict" description="In Ref. 1; BAG59025." evidence="3" ref="1">
    <original>I</original>
    <variation>V</variation>
    <location>
        <position position="905"/>
    </location>
</feature>
<comment type="subcellular location">
    <subcellularLocation>
        <location evidence="3">Membrane</location>
        <topology evidence="3">Single-pass membrane protein</topology>
    </subcellularLocation>
</comment>
<comment type="similarity">
    <text evidence="3">Belongs to the NPIP family.</text>
</comment>
<proteinExistence type="evidence at transcript level"/>
<dbReference type="EMBL" id="AK296338">
    <property type="protein sequence ID" value="BAG59025.1"/>
    <property type="molecule type" value="mRNA"/>
</dbReference>
<dbReference type="EMBL" id="AC106788">
    <property type="status" value="NOT_ANNOTATED_CDS"/>
    <property type="molecule type" value="Genomic_DNA"/>
</dbReference>
<dbReference type="CCDS" id="CCDS45443.1"/>
<dbReference type="RefSeq" id="NP_001129337.1">
    <property type="nucleotide sequence ID" value="NM_001135865.3"/>
</dbReference>
<dbReference type="RefSeq" id="NP_001382778.1">
    <property type="nucleotide sequence ID" value="NM_001395849.1"/>
</dbReference>
<dbReference type="RefSeq" id="NP_001382779.1">
    <property type="nucleotide sequence ID" value="NM_001395850.1"/>
</dbReference>
<dbReference type="RefSeq" id="NP_001382780.1">
    <property type="nucleotide sequence ID" value="NM_001395851.1"/>
</dbReference>
<dbReference type="SMR" id="A8MRT5"/>
<dbReference type="BioGRID" id="935725">
    <property type="interactions" value="3"/>
</dbReference>
<dbReference type="FunCoup" id="A8MRT5">
    <property type="interactions" value="16"/>
</dbReference>
<dbReference type="IntAct" id="A8MRT5">
    <property type="interactions" value="1"/>
</dbReference>
<dbReference type="STRING" id="9606.ENSP00000440703"/>
<dbReference type="GlyGen" id="A8MRT5">
    <property type="glycosylation" value="1 site"/>
</dbReference>
<dbReference type="iPTMnet" id="A8MRT5"/>
<dbReference type="PhosphoSitePlus" id="A8MRT5"/>
<dbReference type="BioMuta" id="NPIPB5"/>
<dbReference type="jPOST" id="A8MRT5"/>
<dbReference type="MassIVE" id="A8MRT5"/>
<dbReference type="PaxDb" id="9606-ENSP00000440703"/>
<dbReference type="Ensembl" id="ENST00000424340.7">
    <property type="protein sequence ID" value="ENSP00000440703.1"/>
    <property type="gene ID" value="ENSG00000243716.13"/>
</dbReference>
<dbReference type="Ensembl" id="ENST00000517539.6">
    <property type="protein sequence ID" value="ENSP00000430633.1"/>
    <property type="gene ID" value="ENSG00000243716.13"/>
</dbReference>
<dbReference type="GeneID" id="100132247"/>
<dbReference type="KEGG" id="hsa:100132247"/>
<dbReference type="MANE-Select" id="ENST00000424340.7">
    <property type="protein sequence ID" value="ENSP00000440703.1"/>
    <property type="RefSeq nucleotide sequence ID" value="NM_001395849.1"/>
    <property type="RefSeq protein sequence ID" value="NP_001382778.1"/>
</dbReference>
<dbReference type="UCSC" id="uc010vbv.3">
    <property type="organism name" value="human"/>
</dbReference>
<dbReference type="AGR" id="HGNC:37233"/>
<dbReference type="CTD" id="100132247"/>
<dbReference type="GeneCards" id="NPIPB5"/>
<dbReference type="HGNC" id="HGNC:37233">
    <property type="gene designation" value="NPIPB5"/>
</dbReference>
<dbReference type="HPA" id="ENSG00000243716">
    <property type="expression patterns" value="Low tissue specificity"/>
</dbReference>
<dbReference type="neXtProt" id="NX_A8MRT5"/>
<dbReference type="OpenTargets" id="ENSG00000243716"/>
<dbReference type="VEuPathDB" id="HostDB:ENSG00000243716"/>
<dbReference type="eggNOG" id="ENOG502TDBV">
    <property type="taxonomic scope" value="Eukaryota"/>
</dbReference>
<dbReference type="GeneTree" id="ENSGT00540000072033"/>
<dbReference type="HOGENOM" id="CLU_308511_0_0_1"/>
<dbReference type="InParanoid" id="A8MRT5"/>
<dbReference type="OMA" id="LMHPTIP"/>
<dbReference type="OrthoDB" id="9470913at2759"/>
<dbReference type="PAN-GO" id="A8MRT5">
    <property type="GO annotations" value="1 GO annotation based on evolutionary models"/>
</dbReference>
<dbReference type="PhylomeDB" id="A8MRT5"/>
<dbReference type="PathwayCommons" id="A8MRT5"/>
<dbReference type="BioGRID-ORCS" id="100132247">
    <property type="hits" value="139 hits in 718 CRISPR screens"/>
</dbReference>
<dbReference type="ChiTaRS" id="NPIPB5">
    <property type="organism name" value="human"/>
</dbReference>
<dbReference type="GenomeRNAi" id="100132247"/>
<dbReference type="Pharos" id="A8MRT5">
    <property type="development level" value="Tdark"/>
</dbReference>
<dbReference type="PRO" id="PR:A8MRT5"/>
<dbReference type="Proteomes" id="UP000005640">
    <property type="component" value="Chromosome 16"/>
</dbReference>
<dbReference type="RNAct" id="A8MRT5">
    <property type="molecule type" value="protein"/>
</dbReference>
<dbReference type="Bgee" id="ENSG00000243716">
    <property type="expression patterns" value="Expressed in right uterine tube and 174 other cell types or tissues"/>
</dbReference>
<dbReference type="ExpressionAtlas" id="A8MRT5">
    <property type="expression patterns" value="baseline and differential"/>
</dbReference>
<dbReference type="GO" id="GO:0016020">
    <property type="term" value="C:membrane"/>
    <property type="evidence" value="ECO:0007669"/>
    <property type="project" value="UniProtKB-SubCell"/>
</dbReference>
<dbReference type="InterPro" id="IPR048893">
    <property type="entry name" value="NPB13-like_MII_rpt"/>
</dbReference>
<dbReference type="InterPro" id="IPR009443">
    <property type="entry name" value="NPIP"/>
</dbReference>
<dbReference type="InterPro" id="IPR054697">
    <property type="entry name" value="NPIP_N"/>
</dbReference>
<dbReference type="PANTHER" id="PTHR15438">
    <property type="entry name" value="NUCLEAR PORE COMPLEX INTERACTING PROTEIN"/>
    <property type="match status" value="1"/>
</dbReference>
<dbReference type="PANTHER" id="PTHR15438:SF5">
    <property type="entry name" value="NUCLEAR PORE COMPLEX-INTERACTING PROTEIN FAMILY MEMBER A2-RELATED"/>
    <property type="match status" value="1"/>
</dbReference>
<dbReference type="Pfam" id="PF20885">
    <property type="entry name" value="NPB13-l_MII_rpt"/>
    <property type="match status" value="2"/>
</dbReference>
<dbReference type="Pfam" id="PF06409">
    <property type="entry name" value="NPIP"/>
    <property type="match status" value="1"/>
</dbReference>
<protein>
    <recommendedName>
        <fullName>Nuclear pore complex-interacting protein family member B5</fullName>
    </recommendedName>
</protein>
<reference key="1">
    <citation type="journal article" date="2004" name="Nat. Genet.">
        <title>Complete sequencing and characterization of 21,243 full-length human cDNAs.</title>
        <authorList>
            <person name="Ota T."/>
            <person name="Suzuki Y."/>
            <person name="Nishikawa T."/>
            <person name="Otsuki T."/>
            <person name="Sugiyama T."/>
            <person name="Irie R."/>
            <person name="Wakamatsu A."/>
            <person name="Hayashi K."/>
            <person name="Sato H."/>
            <person name="Nagai K."/>
            <person name="Kimura K."/>
            <person name="Makita H."/>
            <person name="Sekine M."/>
            <person name="Obayashi M."/>
            <person name="Nishi T."/>
            <person name="Shibahara T."/>
            <person name="Tanaka T."/>
            <person name="Ishii S."/>
            <person name="Yamamoto J."/>
            <person name="Saito K."/>
            <person name="Kawai Y."/>
            <person name="Isono Y."/>
            <person name="Nakamura Y."/>
            <person name="Nagahari K."/>
            <person name="Murakami K."/>
            <person name="Yasuda T."/>
            <person name="Iwayanagi T."/>
            <person name="Wagatsuma M."/>
            <person name="Shiratori A."/>
            <person name="Sudo H."/>
            <person name="Hosoiri T."/>
            <person name="Kaku Y."/>
            <person name="Kodaira H."/>
            <person name="Kondo H."/>
            <person name="Sugawara M."/>
            <person name="Takahashi M."/>
            <person name="Kanda K."/>
            <person name="Yokoi T."/>
            <person name="Furuya T."/>
            <person name="Kikkawa E."/>
            <person name="Omura Y."/>
            <person name="Abe K."/>
            <person name="Kamihara K."/>
            <person name="Katsuta N."/>
            <person name="Sato K."/>
            <person name="Tanikawa M."/>
            <person name="Yamazaki M."/>
            <person name="Ninomiya K."/>
            <person name="Ishibashi T."/>
            <person name="Yamashita H."/>
            <person name="Murakawa K."/>
            <person name="Fujimori K."/>
            <person name="Tanai H."/>
            <person name="Kimata M."/>
            <person name="Watanabe M."/>
            <person name="Hiraoka S."/>
            <person name="Chiba Y."/>
            <person name="Ishida S."/>
            <person name="Ono Y."/>
            <person name="Takiguchi S."/>
            <person name="Watanabe S."/>
            <person name="Yosida M."/>
            <person name="Hotuta T."/>
            <person name="Kusano J."/>
            <person name="Kanehori K."/>
            <person name="Takahashi-Fujii A."/>
            <person name="Hara H."/>
            <person name="Tanase T.-O."/>
            <person name="Nomura Y."/>
            <person name="Togiya S."/>
            <person name="Komai F."/>
            <person name="Hara R."/>
            <person name="Takeuchi K."/>
            <person name="Arita M."/>
            <person name="Imose N."/>
            <person name="Musashino K."/>
            <person name="Yuuki H."/>
            <person name="Oshima A."/>
            <person name="Sasaki N."/>
            <person name="Aotsuka S."/>
            <person name="Yoshikawa Y."/>
            <person name="Matsunawa H."/>
            <person name="Ichihara T."/>
            <person name="Shiohata N."/>
            <person name="Sano S."/>
            <person name="Moriya S."/>
            <person name="Momiyama H."/>
            <person name="Satoh N."/>
            <person name="Takami S."/>
            <person name="Terashima Y."/>
            <person name="Suzuki O."/>
            <person name="Nakagawa S."/>
            <person name="Senoh A."/>
            <person name="Mizoguchi H."/>
            <person name="Goto Y."/>
            <person name="Shimizu F."/>
            <person name="Wakebe H."/>
            <person name="Hishigaki H."/>
            <person name="Watanabe T."/>
            <person name="Sugiyama A."/>
            <person name="Takemoto M."/>
            <person name="Kawakami B."/>
            <person name="Yamazaki M."/>
            <person name="Watanabe K."/>
            <person name="Kumagai A."/>
            <person name="Itakura S."/>
            <person name="Fukuzumi Y."/>
            <person name="Fujimori Y."/>
            <person name="Komiyama M."/>
            <person name="Tashiro H."/>
            <person name="Tanigami A."/>
            <person name="Fujiwara T."/>
            <person name="Ono T."/>
            <person name="Yamada K."/>
            <person name="Fujii Y."/>
            <person name="Ozaki K."/>
            <person name="Hirao M."/>
            <person name="Ohmori Y."/>
            <person name="Kawabata A."/>
            <person name="Hikiji T."/>
            <person name="Kobatake N."/>
            <person name="Inagaki H."/>
            <person name="Ikema Y."/>
            <person name="Okamoto S."/>
            <person name="Okitani R."/>
            <person name="Kawakami T."/>
            <person name="Noguchi S."/>
            <person name="Itoh T."/>
            <person name="Shigeta K."/>
            <person name="Senba T."/>
            <person name="Matsumura K."/>
            <person name="Nakajima Y."/>
            <person name="Mizuno T."/>
            <person name="Morinaga M."/>
            <person name="Sasaki M."/>
            <person name="Togashi T."/>
            <person name="Oyama M."/>
            <person name="Hata H."/>
            <person name="Watanabe M."/>
            <person name="Komatsu T."/>
            <person name="Mizushima-Sugano J."/>
            <person name="Satoh T."/>
            <person name="Shirai Y."/>
            <person name="Takahashi Y."/>
            <person name="Nakagawa K."/>
            <person name="Okumura K."/>
            <person name="Nagase T."/>
            <person name="Nomura N."/>
            <person name="Kikuchi H."/>
            <person name="Masuho Y."/>
            <person name="Yamashita R."/>
            <person name="Nakai K."/>
            <person name="Yada T."/>
            <person name="Nakamura Y."/>
            <person name="Ohara O."/>
            <person name="Isogai T."/>
            <person name="Sugano S."/>
        </authorList>
    </citation>
    <scope>NUCLEOTIDE SEQUENCE [LARGE SCALE MRNA]</scope>
    <source>
        <tissue>Thalamus</tissue>
    </source>
</reference>
<reference key="2">
    <citation type="journal article" date="2004" name="Nature">
        <title>The sequence and analysis of duplication-rich human chromosome 16.</title>
        <authorList>
            <person name="Martin J."/>
            <person name="Han C."/>
            <person name="Gordon L.A."/>
            <person name="Terry A."/>
            <person name="Prabhakar S."/>
            <person name="She X."/>
            <person name="Xie G."/>
            <person name="Hellsten U."/>
            <person name="Chan Y.M."/>
            <person name="Altherr M."/>
            <person name="Couronne O."/>
            <person name="Aerts A."/>
            <person name="Bajorek E."/>
            <person name="Black S."/>
            <person name="Blumer H."/>
            <person name="Branscomb E."/>
            <person name="Brown N.C."/>
            <person name="Bruno W.J."/>
            <person name="Buckingham J.M."/>
            <person name="Callen D.F."/>
            <person name="Campbell C.S."/>
            <person name="Campbell M.L."/>
            <person name="Campbell E.W."/>
            <person name="Caoile C."/>
            <person name="Challacombe J.F."/>
            <person name="Chasteen L.A."/>
            <person name="Chertkov O."/>
            <person name="Chi H.C."/>
            <person name="Christensen M."/>
            <person name="Clark L.M."/>
            <person name="Cohn J.D."/>
            <person name="Denys M."/>
            <person name="Detter J.C."/>
            <person name="Dickson M."/>
            <person name="Dimitrijevic-Bussod M."/>
            <person name="Escobar J."/>
            <person name="Fawcett J.J."/>
            <person name="Flowers D."/>
            <person name="Fotopulos D."/>
            <person name="Glavina T."/>
            <person name="Gomez M."/>
            <person name="Gonzales E."/>
            <person name="Goodstein D."/>
            <person name="Goodwin L.A."/>
            <person name="Grady D.L."/>
            <person name="Grigoriev I."/>
            <person name="Groza M."/>
            <person name="Hammon N."/>
            <person name="Hawkins T."/>
            <person name="Haydu L."/>
            <person name="Hildebrand C.E."/>
            <person name="Huang W."/>
            <person name="Israni S."/>
            <person name="Jett J."/>
            <person name="Jewett P.B."/>
            <person name="Kadner K."/>
            <person name="Kimball H."/>
            <person name="Kobayashi A."/>
            <person name="Krawczyk M.-C."/>
            <person name="Leyba T."/>
            <person name="Longmire J.L."/>
            <person name="Lopez F."/>
            <person name="Lou Y."/>
            <person name="Lowry S."/>
            <person name="Ludeman T."/>
            <person name="Manohar C.F."/>
            <person name="Mark G.A."/>
            <person name="McMurray K.L."/>
            <person name="Meincke L.J."/>
            <person name="Morgan J."/>
            <person name="Moyzis R.K."/>
            <person name="Mundt M.O."/>
            <person name="Munk A.C."/>
            <person name="Nandkeshwar R.D."/>
            <person name="Pitluck S."/>
            <person name="Pollard M."/>
            <person name="Predki P."/>
            <person name="Parson-Quintana B."/>
            <person name="Ramirez L."/>
            <person name="Rash S."/>
            <person name="Retterer J."/>
            <person name="Ricke D.O."/>
            <person name="Robinson D.L."/>
            <person name="Rodriguez A."/>
            <person name="Salamov A."/>
            <person name="Saunders E.H."/>
            <person name="Scott D."/>
            <person name="Shough T."/>
            <person name="Stallings R.L."/>
            <person name="Stalvey M."/>
            <person name="Sutherland R.D."/>
            <person name="Tapia R."/>
            <person name="Tesmer J.G."/>
            <person name="Thayer N."/>
            <person name="Thompson L.S."/>
            <person name="Tice H."/>
            <person name="Torney D.C."/>
            <person name="Tran-Gyamfi M."/>
            <person name="Tsai M."/>
            <person name="Ulanovsky L.E."/>
            <person name="Ustaszewska A."/>
            <person name="Vo N."/>
            <person name="White P.S."/>
            <person name="Williams A.L."/>
            <person name="Wills P.L."/>
            <person name="Wu J.-R."/>
            <person name="Wu K."/>
            <person name="Yang J."/>
            <person name="DeJong P."/>
            <person name="Bruce D."/>
            <person name="Doggett N.A."/>
            <person name="Deaven L."/>
            <person name="Schmutz J."/>
            <person name="Grimwood J."/>
            <person name="Richardson P."/>
            <person name="Rokhsar D.S."/>
            <person name="Eichler E.E."/>
            <person name="Gilna P."/>
            <person name="Lucas S.M."/>
            <person name="Myers R.M."/>
            <person name="Rubin E.M."/>
            <person name="Pennacchio L.A."/>
        </authorList>
    </citation>
    <scope>NUCLEOTIDE SEQUENCE [LARGE SCALE GENOMIC DNA]</scope>
</reference>
<name>NPIB5_HUMAN</name>
<sequence>MVKLSIVLTPQFLSHDQGQLTKELQQHVKSVTCPCEYLRKVINTLADHHHRGTDFGGSPWLHVIIAFPTSYKVVITLWIVYLWVSLLKTIFWSRNGHDGSTDVQQRAWRSNRRRQEGLRSICMHTKKRVSSFRGNKIGLKDVITLRRHVETKVRAKIRKRKVTTKINHHDKINGKRKTARKQKMFQRAQELRRRAEDYHKCKIPPSARKALCNWVRMAAAEHRHSSGLPYWPYLTAETLKNRMGHQPPPPTQQHSITDNSLSLKTPPECLLTPLPPSADDNLKTPPECVLTPLPPSADDNLKTPPECVLTPLPPSADDNLKTPPECLLTPLPPSADDNLKTPPECLLTPLPPSALPSAPPSADDNLKTRAECLLHPLPPSADDNLKTPSERQLTPLPPSAPPSADDNIKTPAERLRGPLPPSADDNLKTPSERQLTPLPPSAPPSADDNIKTPAERLRGPLPPSADDNLKTPSERQLTPLPPSAPPSADDNIKTPAERLRGPLPPSADDNLKTPSERQLTALPPSADDNIKTPAERLRGPLPPSADDNLKTPSERQLTPLPPSAPPSADDNIKTPAFHPQRMISRHLPSVSSLPFHPQLHPQQMIISRYLLSVCGFRFHHQPMIISRHLPSVSSLPFHPQLHPQQMIISRHLPSVCGGRFHPERMIISRHLPSVSSLPFHPQLHPQQMIISRHLPSVCGGRFHPQQMIISRHLPSVSSLPFHPQLHPQQMIISRHLPSVCGGRFHPQRMIISRHLPSVSSLPFHPQLHPQQMIISRHLPSVCGGRFHPQQMIISRHLPSVSSLPFHPQLHPQQMIISRHLPSVCGGRFHPQRMIISRHLPSVSSLPFHPQLHPQQMIISRHLPSVCGERLRGPLPPSADDNLKTPSERQLTPLPPSAPPSADDNIKTPAERLRGPLPPSADDNLKTPSERQLTPLPPSAPPSADDNIKTPAERLRGPLPPSADDNLKTPSERQLTPLPPSAPPSADDNIKTPAERLRGPLPPSADDNLKTPPLATQEAEAEKPRKPKRQRAAEMEPPPEPKRRRVGDVEPSRKPKRRRAADVEPSSPEPKRRRVGDVEPSRKPKRRRAADVEPSSPEPKRRRVGDVEPSRKPKRRRAADVEPSLPEPKRRRLS</sequence>